<name>TO1E_HADIN</name>
<comment type="function">
    <text evidence="2">Inhibits insect, but not mammalian, voltage-gated calcium channels (Cav).</text>
</comment>
<comment type="subcellular location">
    <subcellularLocation>
        <location evidence="5">Secreted</location>
    </subcellularLocation>
</comment>
<comment type="tissue specificity">
    <text evidence="5">Expressed by the venom gland.</text>
</comment>
<comment type="domain">
    <text evidence="1">The presence of a 'disulfide through disulfide knot' structurally defines this protein as a knottin.</text>
</comment>
<comment type="similarity">
    <text evidence="4">Belongs to the neurotoxin 08 (Shiva) family. 01 (omega toxin) subfamily.</text>
</comment>
<dbReference type="EMBL" id="HG001284">
    <property type="protein sequence ID" value="CDF44145.1"/>
    <property type="molecule type" value="mRNA"/>
</dbReference>
<dbReference type="SMR" id="S0F1N0"/>
<dbReference type="GO" id="GO:0005576">
    <property type="term" value="C:extracellular region"/>
    <property type="evidence" value="ECO:0007669"/>
    <property type="project" value="UniProtKB-SubCell"/>
</dbReference>
<dbReference type="GO" id="GO:0019855">
    <property type="term" value="F:calcium channel inhibitor activity"/>
    <property type="evidence" value="ECO:0007669"/>
    <property type="project" value="InterPro"/>
</dbReference>
<dbReference type="GO" id="GO:0090729">
    <property type="term" value="F:toxin activity"/>
    <property type="evidence" value="ECO:0007669"/>
    <property type="project" value="UniProtKB-KW"/>
</dbReference>
<dbReference type="GO" id="GO:0006952">
    <property type="term" value="P:defense response"/>
    <property type="evidence" value="ECO:0007669"/>
    <property type="project" value="InterPro"/>
</dbReference>
<dbReference type="InterPro" id="IPR009415">
    <property type="entry name" value="Omega-atracotox"/>
</dbReference>
<dbReference type="Pfam" id="PF06357">
    <property type="entry name" value="Omega-toxin"/>
    <property type="match status" value="1"/>
</dbReference>
<dbReference type="SUPFAM" id="SSF57059">
    <property type="entry name" value="omega toxin-like"/>
    <property type="match status" value="1"/>
</dbReference>
<evidence type="ECO:0000250" key="1"/>
<evidence type="ECO:0000250" key="2">
    <source>
        <dbReference type="UniProtKB" id="P56207"/>
    </source>
</evidence>
<evidence type="ECO:0000255" key="3"/>
<evidence type="ECO:0000303" key="4">
    <source>
    </source>
</evidence>
<evidence type="ECO:0000305" key="5">
    <source>
    </source>
</evidence>
<sequence>MNTATGFIVLLVLATVIGCISADFQGGFEPYEGEDAERIFRRSPTCIPTGQPCPYNENCCSQSCTYKANENGNQVKGCD</sequence>
<keyword id="KW-0108">Calcium channel impairing toxin</keyword>
<keyword id="KW-0165">Cleavage on pair of basic residues</keyword>
<keyword id="KW-1015">Disulfide bond</keyword>
<keyword id="KW-0872">Ion channel impairing toxin</keyword>
<keyword id="KW-0960">Knottin</keyword>
<keyword id="KW-0964">Secreted</keyword>
<keyword id="KW-0732">Signal</keyword>
<keyword id="KW-0800">Toxin</keyword>
<keyword id="KW-1218">Voltage-gated calcium channel impairing toxin</keyword>
<reference key="1">
    <citation type="journal article" date="2014" name="BMC Genomics">
        <title>Diversification of a single ancestral gene into a successful toxin superfamily in highly venomous Australian funnel-web spiders.</title>
        <authorList>
            <person name="Pineda S.S."/>
            <person name="Sollod B.L."/>
            <person name="Wilson D."/>
            <person name="Darling A."/>
            <person name="Sunagar K."/>
            <person name="Undheim E.A."/>
            <person name="Kely L."/>
            <person name="Antunes A."/>
            <person name="Fry B.G."/>
            <person name="King G.F."/>
        </authorList>
    </citation>
    <scope>NUCLEOTIDE SEQUENCE [MRNA]</scope>
    <source>
        <tissue>Venom gland</tissue>
    </source>
</reference>
<organism>
    <name type="scientific">Hadronyche infensa</name>
    <name type="common">Fraser island funnel-web spider</name>
    <name type="synonym">Atrax infensus</name>
    <dbReference type="NCBI Taxonomy" id="153481"/>
    <lineage>
        <taxon>Eukaryota</taxon>
        <taxon>Metazoa</taxon>
        <taxon>Ecdysozoa</taxon>
        <taxon>Arthropoda</taxon>
        <taxon>Chelicerata</taxon>
        <taxon>Arachnida</taxon>
        <taxon>Araneae</taxon>
        <taxon>Mygalomorphae</taxon>
        <taxon>Hexathelidae</taxon>
        <taxon>Hadronyche</taxon>
    </lineage>
</organism>
<protein>
    <recommendedName>
        <fullName evidence="4">Omega-hexatoxin-Hi1e</fullName>
        <shortName evidence="5">Omega-HXTX-Hi1e</shortName>
    </recommendedName>
</protein>
<accession>S0F1N0</accession>
<feature type="signal peptide" evidence="3">
    <location>
        <begin position="1"/>
        <end position="22"/>
    </location>
</feature>
<feature type="propeptide" id="PRO_0000430904" evidence="1">
    <location>
        <begin position="23"/>
        <end position="40"/>
    </location>
</feature>
<feature type="chain" id="PRO_0000430905" description="Omega-hexatoxin-Hi1e">
    <location>
        <begin position="43"/>
        <end position="79"/>
    </location>
</feature>
<feature type="site" description="Critical for insecticidal activity" evidence="2">
    <location>
        <position position="52"/>
    </location>
</feature>
<feature type="site" description="Critical for insecticidal activity" evidence="2">
    <location>
        <position position="69"/>
    </location>
</feature>
<feature type="disulfide bond" evidence="2">
    <location>
        <begin position="46"/>
        <end position="60"/>
    </location>
</feature>
<feature type="disulfide bond" evidence="2">
    <location>
        <begin position="53"/>
        <end position="64"/>
    </location>
</feature>
<feature type="disulfide bond" evidence="2">
    <location>
        <begin position="59"/>
        <end position="78"/>
    </location>
</feature>
<proteinExistence type="inferred from homology"/>